<feature type="chain" id="PRO_0000098014" description="Urease subunit gamma">
    <location>
        <begin position="1"/>
        <end position="100"/>
    </location>
</feature>
<reference key="1">
    <citation type="journal article" date="1995" name="Science">
        <title>Whole-genome random sequencing and assembly of Haemophilus influenzae Rd.</title>
        <authorList>
            <person name="Fleischmann R.D."/>
            <person name="Adams M.D."/>
            <person name="White O."/>
            <person name="Clayton R.A."/>
            <person name="Kirkness E.F."/>
            <person name="Kerlavage A.R."/>
            <person name="Bult C.J."/>
            <person name="Tomb J.-F."/>
            <person name="Dougherty B.A."/>
            <person name="Merrick J.M."/>
            <person name="McKenney K."/>
            <person name="Sutton G.G."/>
            <person name="FitzHugh W."/>
            <person name="Fields C.A."/>
            <person name="Gocayne J.D."/>
            <person name="Scott J.D."/>
            <person name="Shirley R."/>
            <person name="Liu L.-I."/>
            <person name="Glodek A."/>
            <person name="Kelley J.M."/>
            <person name="Weidman J.F."/>
            <person name="Phillips C.A."/>
            <person name="Spriggs T."/>
            <person name="Hedblom E."/>
            <person name="Cotton M.D."/>
            <person name="Utterback T.R."/>
            <person name="Hanna M.C."/>
            <person name="Nguyen D.T."/>
            <person name="Saudek D.M."/>
            <person name="Brandon R.C."/>
            <person name="Fine L.D."/>
            <person name="Fritchman J.L."/>
            <person name="Fuhrmann J.L."/>
            <person name="Geoghagen N.S.M."/>
            <person name="Gnehm C.L."/>
            <person name="McDonald L.A."/>
            <person name="Small K.V."/>
            <person name="Fraser C.M."/>
            <person name="Smith H.O."/>
            <person name="Venter J.C."/>
        </authorList>
    </citation>
    <scope>NUCLEOTIDE SEQUENCE [LARGE SCALE GENOMIC DNA]</scope>
    <source>
        <strain>ATCC 51907 / DSM 11121 / KW20 / Rd</strain>
    </source>
</reference>
<protein>
    <recommendedName>
        <fullName evidence="1">Urease subunit gamma</fullName>
        <ecNumber evidence="1">3.5.1.5</ecNumber>
    </recommendedName>
    <alternativeName>
        <fullName evidence="1">Urea amidohydrolase subunit gamma</fullName>
    </alternativeName>
</protein>
<gene>
    <name evidence="1" type="primary">ureA</name>
    <name type="ordered locus">HI_0541</name>
</gene>
<name>URE3_HAEIN</name>
<organism>
    <name type="scientific">Haemophilus influenzae (strain ATCC 51907 / DSM 11121 / KW20 / Rd)</name>
    <dbReference type="NCBI Taxonomy" id="71421"/>
    <lineage>
        <taxon>Bacteria</taxon>
        <taxon>Pseudomonadati</taxon>
        <taxon>Pseudomonadota</taxon>
        <taxon>Gammaproteobacteria</taxon>
        <taxon>Pasteurellales</taxon>
        <taxon>Pasteurellaceae</taxon>
        <taxon>Haemophilus</taxon>
    </lineage>
</organism>
<sequence>MHLTSREQEKLMLFLAGELAAKRKARGVKLNYPETIAYIASHLQEAAREGMSVAEVMQYGATLLTVDDVMEGVAEMVHEVQIEATFPDGTKLVTVHNPIR</sequence>
<comment type="catalytic activity">
    <reaction evidence="1">
        <text>urea + 2 H2O + H(+) = hydrogencarbonate + 2 NH4(+)</text>
        <dbReference type="Rhea" id="RHEA:20557"/>
        <dbReference type="ChEBI" id="CHEBI:15377"/>
        <dbReference type="ChEBI" id="CHEBI:15378"/>
        <dbReference type="ChEBI" id="CHEBI:16199"/>
        <dbReference type="ChEBI" id="CHEBI:17544"/>
        <dbReference type="ChEBI" id="CHEBI:28938"/>
        <dbReference type="EC" id="3.5.1.5"/>
    </reaction>
</comment>
<comment type="pathway">
    <text evidence="1">Nitrogen metabolism; urea degradation; CO(2) and NH(3) from urea (urease route): step 1/1.</text>
</comment>
<comment type="subunit">
    <text evidence="1">Heterotrimer of UreA (gamma), UreB (beta) and UreC (alpha) subunits. Three heterotrimers associate to form the active enzyme.</text>
</comment>
<comment type="subcellular location">
    <subcellularLocation>
        <location evidence="1">Cytoplasm</location>
    </subcellularLocation>
</comment>
<comment type="similarity">
    <text evidence="1">Belongs to the urease gamma subunit family.</text>
</comment>
<accession>P44393</accession>
<proteinExistence type="inferred from homology"/>
<keyword id="KW-0963">Cytoplasm</keyword>
<keyword id="KW-0378">Hydrolase</keyword>
<keyword id="KW-1185">Reference proteome</keyword>
<dbReference type="EC" id="3.5.1.5" evidence="1"/>
<dbReference type="EMBL" id="L42023">
    <property type="protein sequence ID" value="AAC22199.1"/>
    <property type="molecule type" value="Genomic_DNA"/>
</dbReference>
<dbReference type="PIR" id="A64076">
    <property type="entry name" value="A64076"/>
</dbReference>
<dbReference type="RefSeq" id="NP_438699.1">
    <property type="nucleotide sequence ID" value="NC_000907.1"/>
</dbReference>
<dbReference type="SMR" id="P44393"/>
<dbReference type="STRING" id="71421.HI_0541"/>
<dbReference type="EnsemblBacteria" id="AAC22199">
    <property type="protein sequence ID" value="AAC22199"/>
    <property type="gene ID" value="HI_0541"/>
</dbReference>
<dbReference type="KEGG" id="hin:HI_0541"/>
<dbReference type="PATRIC" id="fig|71421.8.peg.560"/>
<dbReference type="eggNOG" id="COG0831">
    <property type="taxonomic scope" value="Bacteria"/>
</dbReference>
<dbReference type="HOGENOM" id="CLU_145825_1_0_6"/>
<dbReference type="OrthoDB" id="9797217at2"/>
<dbReference type="PhylomeDB" id="P44393"/>
<dbReference type="BioCyc" id="HINF71421:G1GJ1-554-MONOMER"/>
<dbReference type="UniPathway" id="UPA00258">
    <property type="reaction ID" value="UER00370"/>
</dbReference>
<dbReference type="Proteomes" id="UP000000579">
    <property type="component" value="Chromosome"/>
</dbReference>
<dbReference type="GO" id="GO:0005737">
    <property type="term" value="C:cytoplasm"/>
    <property type="evidence" value="ECO:0007669"/>
    <property type="project" value="UniProtKB-SubCell"/>
</dbReference>
<dbReference type="GO" id="GO:0016151">
    <property type="term" value="F:nickel cation binding"/>
    <property type="evidence" value="ECO:0007669"/>
    <property type="project" value="InterPro"/>
</dbReference>
<dbReference type="GO" id="GO:0009039">
    <property type="term" value="F:urease activity"/>
    <property type="evidence" value="ECO:0007669"/>
    <property type="project" value="UniProtKB-UniRule"/>
</dbReference>
<dbReference type="GO" id="GO:0043419">
    <property type="term" value="P:urea catabolic process"/>
    <property type="evidence" value="ECO:0007669"/>
    <property type="project" value="UniProtKB-UniRule"/>
</dbReference>
<dbReference type="CDD" id="cd00390">
    <property type="entry name" value="Urease_gamma"/>
    <property type="match status" value="1"/>
</dbReference>
<dbReference type="Gene3D" id="3.30.280.10">
    <property type="entry name" value="Urease, gamma-like subunit"/>
    <property type="match status" value="1"/>
</dbReference>
<dbReference type="HAMAP" id="MF_00739">
    <property type="entry name" value="Urease_gamma"/>
    <property type="match status" value="1"/>
</dbReference>
<dbReference type="InterPro" id="IPR012010">
    <property type="entry name" value="Urease_gamma"/>
</dbReference>
<dbReference type="InterPro" id="IPR002026">
    <property type="entry name" value="Urease_gamma/gamma-beta_su"/>
</dbReference>
<dbReference type="InterPro" id="IPR036463">
    <property type="entry name" value="Urease_gamma_sf"/>
</dbReference>
<dbReference type="InterPro" id="IPR050069">
    <property type="entry name" value="Urease_subunit"/>
</dbReference>
<dbReference type="NCBIfam" id="NF009712">
    <property type="entry name" value="PRK13241.1"/>
    <property type="match status" value="1"/>
</dbReference>
<dbReference type="NCBIfam" id="TIGR00193">
    <property type="entry name" value="urease_gam"/>
    <property type="match status" value="1"/>
</dbReference>
<dbReference type="PANTHER" id="PTHR33569">
    <property type="entry name" value="UREASE"/>
    <property type="match status" value="1"/>
</dbReference>
<dbReference type="PANTHER" id="PTHR33569:SF1">
    <property type="entry name" value="UREASE"/>
    <property type="match status" value="1"/>
</dbReference>
<dbReference type="Pfam" id="PF00547">
    <property type="entry name" value="Urease_gamma"/>
    <property type="match status" value="1"/>
</dbReference>
<dbReference type="PIRSF" id="PIRSF001223">
    <property type="entry name" value="Urease_gamma"/>
    <property type="match status" value="1"/>
</dbReference>
<dbReference type="SUPFAM" id="SSF54111">
    <property type="entry name" value="Urease, gamma-subunit"/>
    <property type="match status" value="1"/>
</dbReference>
<evidence type="ECO:0000255" key="1">
    <source>
        <dbReference type="HAMAP-Rule" id="MF_00739"/>
    </source>
</evidence>